<dbReference type="EC" id="2.1.1.200" evidence="1"/>
<dbReference type="EMBL" id="AP008232">
    <property type="protein sequence ID" value="BAE75046.1"/>
    <property type="molecule type" value="Genomic_DNA"/>
</dbReference>
<dbReference type="RefSeq" id="WP_011411595.1">
    <property type="nucleotide sequence ID" value="NC_007712.1"/>
</dbReference>
<dbReference type="SMR" id="Q2NS29"/>
<dbReference type="STRING" id="343509.SG1771"/>
<dbReference type="KEGG" id="sgl:SG1771"/>
<dbReference type="eggNOG" id="COG0565">
    <property type="taxonomic scope" value="Bacteria"/>
</dbReference>
<dbReference type="HOGENOM" id="CLU_056931_0_1_6"/>
<dbReference type="OrthoDB" id="9806346at2"/>
<dbReference type="BioCyc" id="SGLO343509:SGP1_RS16095-MONOMER"/>
<dbReference type="Proteomes" id="UP000001932">
    <property type="component" value="Chromosome"/>
</dbReference>
<dbReference type="GO" id="GO:0005829">
    <property type="term" value="C:cytosol"/>
    <property type="evidence" value="ECO:0007669"/>
    <property type="project" value="TreeGrafter"/>
</dbReference>
<dbReference type="GO" id="GO:0003723">
    <property type="term" value="F:RNA binding"/>
    <property type="evidence" value="ECO:0007669"/>
    <property type="project" value="InterPro"/>
</dbReference>
<dbReference type="GO" id="GO:0160206">
    <property type="term" value="F:tRNA (cytidine(32)/uridine(32)-2'-O)-methyltransferase activity"/>
    <property type="evidence" value="ECO:0007669"/>
    <property type="project" value="UniProtKB-EC"/>
</dbReference>
<dbReference type="GO" id="GO:0002128">
    <property type="term" value="P:tRNA nucleoside ribose methylation"/>
    <property type="evidence" value="ECO:0007669"/>
    <property type="project" value="TreeGrafter"/>
</dbReference>
<dbReference type="CDD" id="cd18093">
    <property type="entry name" value="SpoU-like_TrmJ"/>
    <property type="match status" value="1"/>
</dbReference>
<dbReference type="FunFam" id="1.10.8.590:FF:000001">
    <property type="entry name" value="tRNA:Cm32/Um32 methyltransferase"/>
    <property type="match status" value="1"/>
</dbReference>
<dbReference type="FunFam" id="3.40.1280.10:FF:000006">
    <property type="entry name" value="Uncharacterized tRNA/rRNA methyltransferase HI_0380"/>
    <property type="match status" value="1"/>
</dbReference>
<dbReference type="Gene3D" id="1.10.8.590">
    <property type="match status" value="1"/>
</dbReference>
<dbReference type="Gene3D" id="3.40.1280.10">
    <property type="match status" value="1"/>
</dbReference>
<dbReference type="InterPro" id="IPR029028">
    <property type="entry name" value="Alpha/beta_knot_MTases"/>
</dbReference>
<dbReference type="InterPro" id="IPR004384">
    <property type="entry name" value="RNA_MeTrfase_TrmJ/LasT"/>
</dbReference>
<dbReference type="InterPro" id="IPR001537">
    <property type="entry name" value="SpoU_MeTrfase"/>
</dbReference>
<dbReference type="InterPro" id="IPR029026">
    <property type="entry name" value="tRNA_m1G_MTases_N"/>
</dbReference>
<dbReference type="NCBIfam" id="NF011694">
    <property type="entry name" value="PRK15114.1"/>
    <property type="match status" value="1"/>
</dbReference>
<dbReference type="NCBIfam" id="TIGR00050">
    <property type="entry name" value="rRNA_methyl_1"/>
    <property type="match status" value="1"/>
</dbReference>
<dbReference type="PANTHER" id="PTHR42786:SF2">
    <property type="entry name" value="TRNA (CYTIDINE_URIDINE-2'-O-)-METHYLTRANSFERASE TRMJ"/>
    <property type="match status" value="1"/>
</dbReference>
<dbReference type="PANTHER" id="PTHR42786">
    <property type="entry name" value="TRNA/RRNA METHYLTRANSFERASE"/>
    <property type="match status" value="1"/>
</dbReference>
<dbReference type="Pfam" id="PF00588">
    <property type="entry name" value="SpoU_methylase"/>
    <property type="match status" value="1"/>
</dbReference>
<dbReference type="PIRSF" id="PIRSF004808">
    <property type="entry name" value="LasT"/>
    <property type="match status" value="1"/>
</dbReference>
<dbReference type="SUPFAM" id="SSF75217">
    <property type="entry name" value="alpha/beta knot"/>
    <property type="match status" value="1"/>
</dbReference>
<name>TRMJ_SODGM</name>
<reference key="1">
    <citation type="journal article" date="2006" name="Genome Res.">
        <title>Massive genome erosion and functional adaptations provide insights into the symbiotic lifestyle of Sodalis glossinidius in the tsetse host.</title>
        <authorList>
            <person name="Toh H."/>
            <person name="Weiss B.L."/>
            <person name="Perkin S.A.H."/>
            <person name="Yamashita A."/>
            <person name="Oshima K."/>
            <person name="Hattori M."/>
            <person name="Aksoy S."/>
        </authorList>
    </citation>
    <scope>NUCLEOTIDE SEQUENCE [LARGE SCALE GENOMIC DNA]</scope>
    <source>
        <strain>morsitans</strain>
    </source>
</reference>
<organism>
    <name type="scientific">Sodalis glossinidius (strain morsitans)</name>
    <dbReference type="NCBI Taxonomy" id="343509"/>
    <lineage>
        <taxon>Bacteria</taxon>
        <taxon>Pseudomonadati</taxon>
        <taxon>Pseudomonadota</taxon>
        <taxon>Gammaproteobacteria</taxon>
        <taxon>Enterobacterales</taxon>
        <taxon>Bruguierivoracaceae</taxon>
        <taxon>Sodalis</taxon>
    </lineage>
</organism>
<gene>
    <name type="primary">trmJ</name>
    <name type="ordered locus">SG1771</name>
</gene>
<accession>Q2NS29</accession>
<sequence>MLHNIRIVLVETSHTGNIGSTARAMKTMGLSNLYLVNPLHKPDAQAIALSAGASDIIGNASVVDNLDQALAGCSLVVGTSARSRTLPWPMLEPRECGVKSIQEAAQAPVALLFGRERVGLTNDELQKCHFHVQIPANHEYSSLNLAMAVQILAYEVRVAWLDSQRQDATVQEASVYPVAEDLERFYQHLEQVLSGTGFIRRAHPGLVMNKLRRLFNRARPESQELNILRGMLTSIEHTQKPETPAPDTGHGRPQA</sequence>
<protein>
    <recommendedName>
        <fullName evidence="1">tRNA (cytidine/uridine-2'-O-)-methyltransferase TrmJ</fullName>
        <ecNumber evidence="1">2.1.1.200</ecNumber>
    </recommendedName>
    <alternativeName>
        <fullName evidence="1">tRNA (cytidine(32)/uridine(32)-2'-O)-methyltransferase</fullName>
    </alternativeName>
    <alternativeName>
        <fullName evidence="1">tRNA Cm32/Um32 methyltransferase</fullName>
    </alternativeName>
</protein>
<feature type="chain" id="PRO_0000313865" description="tRNA (cytidine/uridine-2'-O-)-methyltransferase TrmJ">
    <location>
        <begin position="1"/>
        <end position="255"/>
    </location>
</feature>
<feature type="region of interest" description="Disordered" evidence="2">
    <location>
        <begin position="236"/>
        <end position="255"/>
    </location>
</feature>
<feature type="binding site" evidence="1">
    <location>
        <begin position="79"/>
        <end position="81"/>
    </location>
    <ligand>
        <name>S-adenosyl-L-methionine</name>
        <dbReference type="ChEBI" id="CHEBI:59789"/>
    </ligand>
</feature>
<feature type="binding site" evidence="1">
    <location>
        <position position="114"/>
    </location>
    <ligand>
        <name>S-adenosyl-L-methionine</name>
        <dbReference type="ChEBI" id="CHEBI:59789"/>
    </ligand>
</feature>
<feature type="binding site" evidence="1">
    <location>
        <position position="134"/>
    </location>
    <ligand>
        <name>S-adenosyl-L-methionine</name>
        <dbReference type="ChEBI" id="CHEBI:59789"/>
    </ligand>
</feature>
<feature type="binding site" evidence="1">
    <location>
        <begin position="141"/>
        <end position="143"/>
    </location>
    <ligand>
        <name>S-adenosyl-L-methionine</name>
        <dbReference type="ChEBI" id="CHEBI:59789"/>
    </ligand>
</feature>
<keyword id="KW-0963">Cytoplasm</keyword>
<keyword id="KW-0489">Methyltransferase</keyword>
<keyword id="KW-0949">S-adenosyl-L-methionine</keyword>
<keyword id="KW-0808">Transferase</keyword>
<keyword id="KW-0819">tRNA processing</keyword>
<comment type="function">
    <text evidence="1">Catalyzes the formation of 2'O-methylated cytidine (Cm32) or 2'O-methylated uridine (Um32) at position 32 in tRNA.</text>
</comment>
<comment type="catalytic activity">
    <reaction evidence="1">
        <text>cytidine(32) in tRNA + S-adenosyl-L-methionine = 2'-O-methylcytidine(32) in tRNA + S-adenosyl-L-homocysteine + H(+)</text>
        <dbReference type="Rhea" id="RHEA:42932"/>
        <dbReference type="Rhea" id="RHEA-COMP:10288"/>
        <dbReference type="Rhea" id="RHEA-COMP:10289"/>
        <dbReference type="ChEBI" id="CHEBI:15378"/>
        <dbReference type="ChEBI" id="CHEBI:57856"/>
        <dbReference type="ChEBI" id="CHEBI:59789"/>
        <dbReference type="ChEBI" id="CHEBI:74495"/>
        <dbReference type="ChEBI" id="CHEBI:82748"/>
        <dbReference type="EC" id="2.1.1.200"/>
    </reaction>
</comment>
<comment type="catalytic activity">
    <reaction evidence="1">
        <text>uridine(32) in tRNA + S-adenosyl-L-methionine = 2'-O-methyluridine(32) in tRNA + S-adenosyl-L-homocysteine + H(+)</text>
        <dbReference type="Rhea" id="RHEA:42936"/>
        <dbReference type="Rhea" id="RHEA-COMP:10107"/>
        <dbReference type="Rhea" id="RHEA-COMP:10290"/>
        <dbReference type="ChEBI" id="CHEBI:15378"/>
        <dbReference type="ChEBI" id="CHEBI:57856"/>
        <dbReference type="ChEBI" id="CHEBI:59789"/>
        <dbReference type="ChEBI" id="CHEBI:65315"/>
        <dbReference type="ChEBI" id="CHEBI:74478"/>
        <dbReference type="EC" id="2.1.1.200"/>
    </reaction>
</comment>
<comment type="subunit">
    <text evidence="1">Homodimer.</text>
</comment>
<comment type="subcellular location">
    <subcellularLocation>
        <location evidence="1">Cytoplasm</location>
    </subcellularLocation>
</comment>
<comment type="similarity">
    <text evidence="3">Belongs to the class IV-like SAM-binding methyltransferase superfamily. RNA methyltransferase TrmH family.</text>
</comment>
<evidence type="ECO:0000250" key="1">
    <source>
        <dbReference type="UniProtKB" id="P0AE01"/>
    </source>
</evidence>
<evidence type="ECO:0000256" key="2">
    <source>
        <dbReference type="SAM" id="MobiDB-lite"/>
    </source>
</evidence>
<evidence type="ECO:0000305" key="3"/>
<proteinExistence type="inferred from homology"/>